<proteinExistence type="inferred from homology"/>
<name>UXUA_ECOLC</name>
<protein>
    <recommendedName>
        <fullName evidence="1">Mannonate dehydratase</fullName>
        <ecNumber evidence="1">4.2.1.8</ecNumber>
    </recommendedName>
    <alternativeName>
        <fullName evidence="1">D-mannonate hydro-lyase</fullName>
    </alternativeName>
</protein>
<comment type="function">
    <text evidence="1">Catalyzes the dehydration of D-mannonate.</text>
</comment>
<comment type="catalytic activity">
    <reaction evidence="1">
        <text>D-mannonate = 2-dehydro-3-deoxy-D-gluconate + H2O</text>
        <dbReference type="Rhea" id="RHEA:20097"/>
        <dbReference type="ChEBI" id="CHEBI:15377"/>
        <dbReference type="ChEBI" id="CHEBI:17767"/>
        <dbReference type="ChEBI" id="CHEBI:57990"/>
        <dbReference type="EC" id="4.2.1.8"/>
    </reaction>
</comment>
<comment type="cofactor">
    <cofactor evidence="1">
        <name>Fe(2+)</name>
        <dbReference type="ChEBI" id="CHEBI:29033"/>
    </cofactor>
    <cofactor evidence="1">
        <name>Mn(2+)</name>
        <dbReference type="ChEBI" id="CHEBI:29035"/>
    </cofactor>
</comment>
<comment type="pathway">
    <text evidence="1">Carbohydrate metabolism; pentose and glucuronate interconversion.</text>
</comment>
<comment type="similarity">
    <text evidence="1">Belongs to the mannonate dehydratase family.</text>
</comment>
<evidence type="ECO:0000255" key="1">
    <source>
        <dbReference type="HAMAP-Rule" id="MF_00106"/>
    </source>
</evidence>
<organism>
    <name type="scientific">Escherichia coli (strain ATCC 8739 / DSM 1576 / NBRC 3972 / NCIMB 8545 / WDCM 00012 / Crooks)</name>
    <dbReference type="NCBI Taxonomy" id="481805"/>
    <lineage>
        <taxon>Bacteria</taxon>
        <taxon>Pseudomonadati</taxon>
        <taxon>Pseudomonadota</taxon>
        <taxon>Gammaproteobacteria</taxon>
        <taxon>Enterobacterales</taxon>
        <taxon>Enterobacteriaceae</taxon>
        <taxon>Escherichia</taxon>
    </lineage>
</organism>
<reference key="1">
    <citation type="submission" date="2008-02" db="EMBL/GenBank/DDBJ databases">
        <title>Complete sequence of Escherichia coli C str. ATCC 8739.</title>
        <authorList>
            <person name="Copeland A."/>
            <person name="Lucas S."/>
            <person name="Lapidus A."/>
            <person name="Glavina del Rio T."/>
            <person name="Dalin E."/>
            <person name="Tice H."/>
            <person name="Bruce D."/>
            <person name="Goodwin L."/>
            <person name="Pitluck S."/>
            <person name="Kiss H."/>
            <person name="Brettin T."/>
            <person name="Detter J.C."/>
            <person name="Han C."/>
            <person name="Kuske C.R."/>
            <person name="Schmutz J."/>
            <person name="Larimer F."/>
            <person name="Land M."/>
            <person name="Hauser L."/>
            <person name="Kyrpides N."/>
            <person name="Mikhailova N."/>
            <person name="Ingram L."/>
            <person name="Richardson P."/>
        </authorList>
    </citation>
    <scope>NUCLEOTIDE SEQUENCE [LARGE SCALE GENOMIC DNA]</scope>
    <source>
        <strain>ATCC 8739 / DSM 1576 / NBRC 3972 / NCIMB 8545 / WDCM 00012 / Crooks</strain>
    </source>
</reference>
<accession>B1ISA3</accession>
<feature type="chain" id="PRO_1000075899" description="Mannonate dehydratase">
    <location>
        <begin position="1"/>
        <end position="389"/>
    </location>
</feature>
<keyword id="KW-0408">Iron</keyword>
<keyword id="KW-0456">Lyase</keyword>
<keyword id="KW-0464">Manganese</keyword>
<gene>
    <name evidence="1" type="primary">uxuA</name>
    <name type="ordered locus">EcolC_3742</name>
</gene>
<sequence>MEQTWRWYGPNDPVSLADVRQAGATGVVTALHHIPNGEVWSVEEILKRKAIVEDAGLVWSVVESVPIHEDIKTHTGNYEQWIANYQQTLRNLAQCGIRTVCYNFMPVLDWTRTDLEYVLPDGSKALRFDQIEFAAFEMHILKRPGAEADYTEEEIAQAAVRFATMSDEDKARLTRNIIAGLPGAEEGYTLDQFRKHLELYKDIDKAKLRENFAVFLKAIIPVAEEVGVRMAVHPDDPPRPILGLPRIVSTIEDMQWMVDTVNSMANGFTMCTGSYGVRADNDLVDMIKQFGPRIYFTHLRSTMREDNPKTFHEAAHLNGDVDMYEVVKAIVEEEHRRKAEGKEDLIPMRPDHGHQMLDDLKKKTNPGYSAIGRLKGLAEVRGTGTGSGA</sequence>
<dbReference type="EC" id="4.2.1.8" evidence="1"/>
<dbReference type="EMBL" id="CP000946">
    <property type="protein sequence ID" value="ACA79351.1"/>
    <property type="molecule type" value="Genomic_DNA"/>
</dbReference>
<dbReference type="RefSeq" id="WP_000438590.1">
    <property type="nucleotide sequence ID" value="NC_010468.1"/>
</dbReference>
<dbReference type="SMR" id="B1ISA3"/>
<dbReference type="KEGG" id="ecl:EcolC_3742"/>
<dbReference type="HOGENOM" id="CLU_058621_2_0_6"/>
<dbReference type="UniPathway" id="UPA00246"/>
<dbReference type="GO" id="GO:0008198">
    <property type="term" value="F:ferrous iron binding"/>
    <property type="evidence" value="ECO:0007669"/>
    <property type="project" value="TreeGrafter"/>
</dbReference>
<dbReference type="GO" id="GO:0030145">
    <property type="term" value="F:manganese ion binding"/>
    <property type="evidence" value="ECO:0007669"/>
    <property type="project" value="TreeGrafter"/>
</dbReference>
<dbReference type="GO" id="GO:0008927">
    <property type="term" value="F:mannonate dehydratase activity"/>
    <property type="evidence" value="ECO:0007669"/>
    <property type="project" value="UniProtKB-UniRule"/>
</dbReference>
<dbReference type="GO" id="GO:0042840">
    <property type="term" value="P:D-glucuronate catabolic process"/>
    <property type="evidence" value="ECO:0007669"/>
    <property type="project" value="TreeGrafter"/>
</dbReference>
<dbReference type="FunFam" id="3.20.20.150:FF:000004">
    <property type="entry name" value="Mannonate dehydratase"/>
    <property type="match status" value="1"/>
</dbReference>
<dbReference type="FunFam" id="3.20.20.150:FF:000005">
    <property type="entry name" value="Mannonate dehydratase"/>
    <property type="match status" value="1"/>
</dbReference>
<dbReference type="Gene3D" id="3.20.20.150">
    <property type="entry name" value="Divalent-metal-dependent TIM barrel enzymes"/>
    <property type="match status" value="2"/>
</dbReference>
<dbReference type="HAMAP" id="MF_00106">
    <property type="entry name" value="UxuA"/>
    <property type="match status" value="1"/>
</dbReference>
<dbReference type="InterPro" id="IPR004628">
    <property type="entry name" value="Man_deHydtase"/>
</dbReference>
<dbReference type="InterPro" id="IPR036237">
    <property type="entry name" value="Xyl_isomerase-like_sf"/>
</dbReference>
<dbReference type="NCBIfam" id="NF003027">
    <property type="entry name" value="PRK03906.1"/>
    <property type="match status" value="1"/>
</dbReference>
<dbReference type="NCBIfam" id="TIGR00695">
    <property type="entry name" value="uxuA"/>
    <property type="match status" value="1"/>
</dbReference>
<dbReference type="PANTHER" id="PTHR30387">
    <property type="entry name" value="MANNONATE DEHYDRATASE"/>
    <property type="match status" value="1"/>
</dbReference>
<dbReference type="PANTHER" id="PTHR30387:SF2">
    <property type="entry name" value="MANNONATE DEHYDRATASE"/>
    <property type="match status" value="1"/>
</dbReference>
<dbReference type="Pfam" id="PF03786">
    <property type="entry name" value="UxuA"/>
    <property type="match status" value="1"/>
</dbReference>
<dbReference type="PIRSF" id="PIRSF016049">
    <property type="entry name" value="Man_dehyd"/>
    <property type="match status" value="1"/>
</dbReference>
<dbReference type="SUPFAM" id="SSF51658">
    <property type="entry name" value="Xylose isomerase-like"/>
    <property type="match status" value="1"/>
</dbReference>